<protein>
    <recommendedName>
        <fullName evidence="5">Potassium channel toxin alpha-KTX 12 Sp2</fullName>
        <shortName evidence="4">KTX-Sp2</shortName>
    </recommendedName>
</protein>
<comment type="function">
    <text evidence="3">Blocks mouse voltage-gated potassium channels Kv1.3/KCNA3 (IC(50)=0.3-30 nM), when the channel is expressed in Jurkat T cells or in HEK293 cells (PubMed:31890149). Also shows a weaker inhibition on mKv1.2/KCNA2 (IC(50)=56.9 nM) and mKv1.1/KCNA1 (IC(50)=485 nM) (PubMed:31890149). Probably through the inhibition of both Kv1.2/KCNA2 and Kv1.3/KCNA3, the toxin also reduces the free calcium concentration in Jurkat T cells, inhibits the activation of Jurkat T cells and reduces the release of inflammatory cytokines interleukin-2, showing a strong immunosuppressant effect (PubMed:31890149).</text>
</comment>
<comment type="subcellular location">
    <subcellularLocation>
        <location evidence="3">Secreted</location>
    </subcellularLocation>
</comment>
<comment type="tissue specificity">
    <text evidence="6">Expressed by the venom gland.</text>
</comment>
<comment type="domain">
    <text evidence="2">Has the structural arrangement of an alpha-helix connected to a beta-sheet by disulfide bonds (CSalpha/beta).</text>
</comment>
<comment type="miscellaneous">
    <text evidence="3">Negative results: does not block voltage-gated sodium channels Nav1.4/SCN4A, Nav1.5/SCN5A, and Nav1.7/SCN9A.</text>
</comment>
<comment type="similarity">
    <text evidence="5">Belongs to the short scorpion toxin superfamily. Potassium channel inhibitor family. Alpha-KTx 12 subfamily.</text>
</comment>
<sequence length="55" mass="5902">MRLAIILLLMTTIVLTIGSPLHGAKCSSSNQCTRPCRYGGGTHGKCMNGRCRCYG</sequence>
<dbReference type="SMR" id="P0DQN5"/>
<dbReference type="GO" id="GO:0005576">
    <property type="term" value="C:extracellular region"/>
    <property type="evidence" value="ECO:0007669"/>
    <property type="project" value="UniProtKB-SubCell"/>
</dbReference>
<dbReference type="GO" id="GO:0008200">
    <property type="term" value="F:ion channel inhibitor activity"/>
    <property type="evidence" value="ECO:0007669"/>
    <property type="project" value="InterPro"/>
</dbReference>
<dbReference type="GO" id="GO:0015459">
    <property type="term" value="F:potassium channel regulator activity"/>
    <property type="evidence" value="ECO:0007669"/>
    <property type="project" value="UniProtKB-KW"/>
</dbReference>
<dbReference type="GO" id="GO:0090729">
    <property type="term" value="F:toxin activity"/>
    <property type="evidence" value="ECO:0007669"/>
    <property type="project" value="UniProtKB-KW"/>
</dbReference>
<dbReference type="Gene3D" id="3.30.30.10">
    <property type="entry name" value="Knottin, scorpion toxin-like"/>
    <property type="match status" value="1"/>
</dbReference>
<dbReference type="InterPro" id="IPR036574">
    <property type="entry name" value="Scorpion_toxin-like_sf"/>
</dbReference>
<dbReference type="InterPro" id="IPR001947">
    <property type="entry name" value="Scorpion_toxinS_K_inh"/>
</dbReference>
<dbReference type="Pfam" id="PF00451">
    <property type="entry name" value="Toxin_2"/>
    <property type="match status" value="1"/>
</dbReference>
<dbReference type="PRINTS" id="PR00286">
    <property type="entry name" value="CHARYBDTOXIN"/>
</dbReference>
<dbReference type="SUPFAM" id="SSF57095">
    <property type="entry name" value="Scorpion toxin-like"/>
    <property type="match status" value="1"/>
</dbReference>
<dbReference type="PROSITE" id="PS01138">
    <property type="entry name" value="SCORP_SHORT_TOXIN"/>
    <property type="match status" value="1"/>
</dbReference>
<evidence type="ECO:0000250" key="1">
    <source>
        <dbReference type="UniProtKB" id="O46028"/>
    </source>
</evidence>
<evidence type="ECO:0000250" key="2">
    <source>
        <dbReference type="UniProtKB" id="P40755"/>
    </source>
</evidence>
<evidence type="ECO:0000269" key="3">
    <source>
    </source>
</evidence>
<evidence type="ECO:0000303" key="4">
    <source>
    </source>
</evidence>
<evidence type="ECO:0000305" key="5"/>
<evidence type="ECO:0000305" key="6">
    <source>
    </source>
</evidence>
<feature type="signal peptide" evidence="6">
    <location>
        <begin position="1"/>
        <end position="18"/>
    </location>
</feature>
<feature type="chain" id="PRO_0000451630" description="Potassium channel toxin alpha-KTX 12 Sp2" evidence="6">
    <location>
        <begin position="19"/>
        <end position="55"/>
    </location>
</feature>
<feature type="disulfide bond" evidence="1">
    <location>
        <begin position="26"/>
        <end position="46"/>
    </location>
</feature>
<feature type="disulfide bond" evidence="1">
    <location>
        <begin position="32"/>
        <end position="51"/>
    </location>
</feature>
<feature type="disulfide bond" evidence="1">
    <location>
        <begin position="36"/>
        <end position="53"/>
    </location>
</feature>
<reference key="1">
    <citation type="journal article" date="2019" name="Cell Biosci.">
        <title>Immunosuppressive effects of a novel potassium channel toxin Ktx-Sp2 from Scorpiops Pocoki.</title>
        <authorList>
            <person name="Zhang Y."/>
            <person name="Zhang F."/>
            <person name="Shi S."/>
            <person name="Liu X."/>
            <person name="Cai W."/>
            <person name="Han G."/>
            <person name="Ke C."/>
            <person name="Long S."/>
            <person name="Di Z."/>
            <person name="Yin S."/>
            <person name="Li H."/>
        </authorList>
    </citation>
    <scope>NUCLEOTIDE SEQUENCE [MRNA]</scope>
    <scope>FUNCTION</scope>
    <source>
        <tissue>Venom gland</tissue>
    </source>
</reference>
<name>KA12O_SCOPC</name>
<accession>P0DQN5</accession>
<keyword id="KW-1015">Disulfide bond</keyword>
<keyword id="KW-0872">Ion channel impairing toxin</keyword>
<keyword id="KW-0528">Neurotoxin</keyword>
<keyword id="KW-0632">Potassium channel impairing toxin</keyword>
<keyword id="KW-0964">Secreted</keyword>
<keyword id="KW-0732">Signal</keyword>
<keyword id="KW-0800">Toxin</keyword>
<keyword id="KW-1220">Voltage-gated potassium channel impairing toxin</keyword>
<proteinExistence type="inferred from homology"/>
<organism>
    <name type="scientific">Scorpiops pococki</name>
    <name type="common">Scorpion</name>
    <dbReference type="NCBI Taxonomy" id="2766750"/>
    <lineage>
        <taxon>Eukaryota</taxon>
        <taxon>Metazoa</taxon>
        <taxon>Ecdysozoa</taxon>
        <taxon>Arthropoda</taxon>
        <taxon>Chelicerata</taxon>
        <taxon>Arachnida</taxon>
        <taxon>Scorpiones</taxon>
        <taxon>Iurida</taxon>
        <taxon>Chactoidea</taxon>
        <taxon>Euscorpiidae</taxon>
        <taxon>Scorpiopinae</taxon>
        <taxon>Scorpiopini</taxon>
        <taxon>Scorpiops</taxon>
    </lineage>
</organism>